<protein>
    <recommendedName>
        <fullName evidence="1">Large ribosomal subunit protein uL30</fullName>
    </recommendedName>
    <alternativeName>
        <fullName evidence="2">50S ribosomal protein L30</fullName>
    </alternativeName>
</protein>
<evidence type="ECO:0000255" key="1">
    <source>
        <dbReference type="HAMAP-Rule" id="MF_01371"/>
    </source>
</evidence>
<evidence type="ECO:0000305" key="2"/>
<feature type="chain" id="PRO_1000087265" description="Large ribosomal subunit protein uL30">
    <location>
        <begin position="1"/>
        <end position="60"/>
    </location>
</feature>
<reference key="1">
    <citation type="submission" date="2007-11" db="EMBL/GenBank/DDBJ databases">
        <title>Complete sequence of chromosome of Shewanella baltica OS195.</title>
        <authorList>
            <consortium name="US DOE Joint Genome Institute"/>
            <person name="Copeland A."/>
            <person name="Lucas S."/>
            <person name="Lapidus A."/>
            <person name="Barry K."/>
            <person name="Glavina del Rio T."/>
            <person name="Dalin E."/>
            <person name="Tice H."/>
            <person name="Pitluck S."/>
            <person name="Chain P."/>
            <person name="Malfatti S."/>
            <person name="Shin M."/>
            <person name="Vergez L."/>
            <person name="Schmutz J."/>
            <person name="Larimer F."/>
            <person name="Land M."/>
            <person name="Hauser L."/>
            <person name="Kyrpides N."/>
            <person name="Kim E."/>
            <person name="Brettar I."/>
            <person name="Rodrigues J."/>
            <person name="Konstantinidis K."/>
            <person name="Klappenbach J."/>
            <person name="Hofle M."/>
            <person name="Tiedje J."/>
            <person name="Richardson P."/>
        </authorList>
    </citation>
    <scope>NUCLEOTIDE SEQUENCE [LARGE SCALE GENOMIC DNA]</scope>
    <source>
        <strain>OS195</strain>
    </source>
</reference>
<name>RL30_SHEB9</name>
<gene>
    <name evidence="1" type="primary">rpmD</name>
    <name type="ordered locus">Sbal195_0218</name>
</gene>
<keyword id="KW-0687">Ribonucleoprotein</keyword>
<keyword id="KW-0689">Ribosomal protein</keyword>
<dbReference type="EMBL" id="CP000891">
    <property type="protein sequence ID" value="ABX47400.1"/>
    <property type="molecule type" value="Genomic_DNA"/>
</dbReference>
<dbReference type="RefSeq" id="WP_006083582.1">
    <property type="nucleotide sequence ID" value="NC_009997.1"/>
</dbReference>
<dbReference type="SMR" id="A9KWC0"/>
<dbReference type="GeneID" id="75190600"/>
<dbReference type="KEGG" id="sbn:Sbal195_0218"/>
<dbReference type="HOGENOM" id="CLU_131047_1_4_6"/>
<dbReference type="Proteomes" id="UP000000770">
    <property type="component" value="Chromosome"/>
</dbReference>
<dbReference type="GO" id="GO:0022625">
    <property type="term" value="C:cytosolic large ribosomal subunit"/>
    <property type="evidence" value="ECO:0007669"/>
    <property type="project" value="TreeGrafter"/>
</dbReference>
<dbReference type="GO" id="GO:0003735">
    <property type="term" value="F:structural constituent of ribosome"/>
    <property type="evidence" value="ECO:0007669"/>
    <property type="project" value="InterPro"/>
</dbReference>
<dbReference type="GO" id="GO:0006412">
    <property type="term" value="P:translation"/>
    <property type="evidence" value="ECO:0007669"/>
    <property type="project" value="UniProtKB-UniRule"/>
</dbReference>
<dbReference type="CDD" id="cd01658">
    <property type="entry name" value="Ribosomal_L30"/>
    <property type="match status" value="1"/>
</dbReference>
<dbReference type="FunFam" id="3.30.1390.20:FF:000001">
    <property type="entry name" value="50S ribosomal protein L30"/>
    <property type="match status" value="1"/>
</dbReference>
<dbReference type="Gene3D" id="3.30.1390.20">
    <property type="entry name" value="Ribosomal protein L30, ferredoxin-like fold domain"/>
    <property type="match status" value="1"/>
</dbReference>
<dbReference type="HAMAP" id="MF_01371_B">
    <property type="entry name" value="Ribosomal_uL30_B"/>
    <property type="match status" value="1"/>
</dbReference>
<dbReference type="InterPro" id="IPR036919">
    <property type="entry name" value="Ribo_uL30_ferredoxin-like_sf"/>
</dbReference>
<dbReference type="InterPro" id="IPR005996">
    <property type="entry name" value="Ribosomal_uL30_bac-type"/>
</dbReference>
<dbReference type="InterPro" id="IPR018038">
    <property type="entry name" value="Ribosomal_uL30_CS"/>
</dbReference>
<dbReference type="InterPro" id="IPR016082">
    <property type="entry name" value="Ribosomal_uL30_ferredoxin-like"/>
</dbReference>
<dbReference type="NCBIfam" id="TIGR01308">
    <property type="entry name" value="rpmD_bact"/>
    <property type="match status" value="1"/>
</dbReference>
<dbReference type="PANTHER" id="PTHR15892:SF2">
    <property type="entry name" value="LARGE RIBOSOMAL SUBUNIT PROTEIN UL30M"/>
    <property type="match status" value="1"/>
</dbReference>
<dbReference type="PANTHER" id="PTHR15892">
    <property type="entry name" value="MITOCHONDRIAL RIBOSOMAL PROTEIN L30"/>
    <property type="match status" value="1"/>
</dbReference>
<dbReference type="Pfam" id="PF00327">
    <property type="entry name" value="Ribosomal_L30"/>
    <property type="match status" value="1"/>
</dbReference>
<dbReference type="PIRSF" id="PIRSF002211">
    <property type="entry name" value="Ribosomal_L30_bac-type"/>
    <property type="match status" value="1"/>
</dbReference>
<dbReference type="SUPFAM" id="SSF55129">
    <property type="entry name" value="Ribosomal protein L30p/L7e"/>
    <property type="match status" value="1"/>
</dbReference>
<dbReference type="PROSITE" id="PS00634">
    <property type="entry name" value="RIBOSOMAL_L30"/>
    <property type="match status" value="1"/>
</dbReference>
<proteinExistence type="inferred from homology"/>
<comment type="subunit">
    <text evidence="1">Part of the 50S ribosomal subunit.</text>
</comment>
<comment type="similarity">
    <text evidence="1">Belongs to the universal ribosomal protein uL30 family.</text>
</comment>
<sequence length="60" mass="6683">MATKTVKVTQTKSGIGRLPKHRATLTGLGLRRIGHTVELEDTPSVRGMINKVYYMVKVED</sequence>
<organism>
    <name type="scientific">Shewanella baltica (strain OS195)</name>
    <dbReference type="NCBI Taxonomy" id="399599"/>
    <lineage>
        <taxon>Bacteria</taxon>
        <taxon>Pseudomonadati</taxon>
        <taxon>Pseudomonadota</taxon>
        <taxon>Gammaproteobacteria</taxon>
        <taxon>Alteromonadales</taxon>
        <taxon>Shewanellaceae</taxon>
        <taxon>Shewanella</taxon>
    </lineage>
</organism>
<accession>A9KWC0</accession>